<organism>
    <name type="scientific">Rhinolophus ferrumequinum</name>
    <name type="common">Greater horseshoe bat</name>
    <dbReference type="NCBI Taxonomy" id="59479"/>
    <lineage>
        <taxon>Eukaryota</taxon>
        <taxon>Metazoa</taxon>
        <taxon>Chordata</taxon>
        <taxon>Craniata</taxon>
        <taxon>Vertebrata</taxon>
        <taxon>Euteleostomi</taxon>
        <taxon>Mammalia</taxon>
        <taxon>Eutheria</taxon>
        <taxon>Laurasiatheria</taxon>
        <taxon>Chiroptera</taxon>
        <taxon>Yinpterochiroptera</taxon>
        <taxon>Rhinolophoidea</taxon>
        <taxon>Rhinolophidae</taxon>
        <taxon>Rhinolophinae</taxon>
        <taxon>Rhinolophus</taxon>
    </lineage>
</organism>
<accession>Q00PJ0</accession>
<keyword id="KW-0325">Glycoprotein</keyword>
<keyword id="KW-0472">Membrane</keyword>
<keyword id="KW-0597">Phosphoprotein</keyword>
<keyword id="KW-1185">Reference proteome</keyword>
<keyword id="KW-0812">Transmembrane</keyword>
<keyword id="KW-1133">Transmembrane helix</keyword>
<protein>
    <recommendedName>
        <fullName>Suppressor of tumorigenicity 7 protein</fullName>
    </recommendedName>
</protein>
<reference key="1">
    <citation type="submission" date="2006-10" db="EMBL/GenBank/DDBJ databases">
        <title>NISC comparative sequencing initiative.</title>
        <authorList>
            <person name="Antonellis A."/>
            <person name="Ayele K."/>
            <person name="Benjamin B."/>
            <person name="Blakesley R.W."/>
            <person name="Boakye A."/>
            <person name="Bouffard G.G."/>
            <person name="Brinkley C."/>
            <person name="Brooks S."/>
            <person name="Chu G."/>
            <person name="Coleman H."/>
            <person name="Engle J."/>
            <person name="Gestole M."/>
            <person name="Greene A."/>
            <person name="Guan X."/>
            <person name="Gupta J."/>
            <person name="Haghighi P."/>
            <person name="Han J."/>
            <person name="Hansen N."/>
            <person name="Ho S.-L."/>
            <person name="Hu P."/>
            <person name="Hunter G."/>
            <person name="Hurle B."/>
            <person name="Idol J.R."/>
            <person name="Kwong P."/>
            <person name="Laric P."/>
            <person name="Larson S."/>
            <person name="Lee-Lin S.-Q."/>
            <person name="Legaspi R."/>
            <person name="Madden M."/>
            <person name="Maduro Q.L."/>
            <person name="Maduro V.B."/>
            <person name="Margulies E.H."/>
            <person name="Masiello C."/>
            <person name="Maskeri B."/>
            <person name="McDowell J."/>
            <person name="Mojidi H.A."/>
            <person name="Mullikin J.C."/>
            <person name="Oestreicher J.S."/>
            <person name="Park M."/>
            <person name="Portnoy M.E."/>
            <person name="Prasad A."/>
            <person name="Puri O."/>
            <person name="Reddix-Dugue N."/>
            <person name="Schandler K."/>
            <person name="Schueler M.G."/>
            <person name="Sison C."/>
            <person name="Stantripop S."/>
            <person name="Stephen E."/>
            <person name="Taye A."/>
            <person name="Thomas J.W."/>
            <person name="Thomas P.J."/>
            <person name="Tsipouri V."/>
            <person name="Ung L."/>
            <person name="Vogt J.L."/>
            <person name="Wetherby K.D."/>
            <person name="Young A."/>
            <person name="Green E.D."/>
        </authorList>
    </citation>
    <scope>NUCLEOTIDE SEQUENCE [LARGE SCALE GENOMIC DNA]</scope>
</reference>
<feature type="chain" id="PRO_0000339216" description="Suppressor of tumorigenicity 7 protein">
    <location>
        <begin position="1"/>
        <end position="585"/>
    </location>
</feature>
<feature type="transmembrane region" description="Helical" evidence="2">
    <location>
        <begin position="15"/>
        <end position="35"/>
    </location>
</feature>
<feature type="transmembrane region" description="Helical" evidence="2">
    <location>
        <begin position="62"/>
        <end position="82"/>
    </location>
</feature>
<feature type="transmembrane region" description="Helical" evidence="2">
    <location>
        <begin position="512"/>
        <end position="532"/>
    </location>
</feature>
<feature type="modified residue" description="Phosphoserine" evidence="1">
    <location>
        <position position="386"/>
    </location>
</feature>
<feature type="glycosylation site" description="N-linked (GlcNAc...) asparagine" evidence="2">
    <location>
        <position position="47"/>
    </location>
</feature>
<proteinExistence type="inferred from homology"/>
<comment type="subcellular location">
    <subcellularLocation>
        <location evidence="3">Membrane</location>
        <topology evidence="3">Multi-pass membrane protein</topology>
    </subcellularLocation>
</comment>
<comment type="similarity">
    <text evidence="3">Belongs to the ST7 family.</text>
</comment>
<sequence length="585" mass="67113">MAEAGTGFLEQLKSCIVWSWTYLWTVWFFIVLFLVYILRVPLKINDNLSTVSMFLNTLTPKFYVALTGTSSLISGLILIFEWWYFRKYGTSFIEQVSVSHLRPLLGGVDNNSSNNSNSSNGDSDSNRQSVSECKVWRNPLNLFRGAEYNRYTWVTGREPLTYYDMNLSAQDHQTFFTCDSDHLRPADAIMQKAWRERNPQARISAAHEALEINEIRSRVEVPLIASSTIWEIKLLPKCATAYILLAEEEATTIAEAEKLFKQALKAGDGCYRRSQQLQHHGSQYEAQHRRDTNVLVYIKRRLAMCARRLGRTREAVKMMRDLMKEFPLLSMFNIHENLLEALLELQAYADVQAVLAKYDDISLPKSATICYTAALLKARAVSDKFSPEAASRRGLSTAEMNAVEAIHRAVEFNPHVPKYLLEMKSLILPPEHILKRGDSEAIAYAFFHLAHWKRVEGALNLLHCTWEGTFRMIPYPLEKGHLFYPYPICTETADRELLPSFHEVSVYPKKELPFFILFTAGLCSFTAMLALLTHQFPELMGVFAKAMIDMFCSAELRDWNCKSIFMRVEDELEIPSAPQSQHFQT</sequence>
<evidence type="ECO:0000250" key="1">
    <source>
        <dbReference type="UniProtKB" id="Q9NRC1"/>
    </source>
</evidence>
<evidence type="ECO:0000255" key="2"/>
<evidence type="ECO:0000305" key="3"/>
<name>ST7_RHIFE</name>
<gene>
    <name type="primary">ST7</name>
</gene>
<dbReference type="EMBL" id="DP000028">
    <property type="protein sequence ID" value="ABC87475.2"/>
    <property type="molecule type" value="Genomic_DNA"/>
</dbReference>
<dbReference type="RefSeq" id="XP_032954752.1">
    <property type="nucleotide sequence ID" value="XM_033098861.1"/>
</dbReference>
<dbReference type="FunCoup" id="Q00PJ0">
    <property type="interactions" value="314"/>
</dbReference>
<dbReference type="GlyCosmos" id="Q00PJ0">
    <property type="glycosylation" value="1 site, No reported glycans"/>
</dbReference>
<dbReference type="Ensembl" id="ENSRFET00010030902.1">
    <property type="protein sequence ID" value="ENSRFEP00010028463.1"/>
    <property type="gene ID" value="ENSRFEG00010018747.1"/>
</dbReference>
<dbReference type="GeneID" id="117018097"/>
<dbReference type="GeneTree" id="ENSGT00390000000873"/>
<dbReference type="InParanoid" id="Q00PJ0"/>
<dbReference type="OMA" id="DRCATAY"/>
<dbReference type="OrthoDB" id="5914722at2759"/>
<dbReference type="Proteomes" id="UP000472240">
    <property type="component" value="Chromosome 26"/>
</dbReference>
<dbReference type="GO" id="GO:0016020">
    <property type="term" value="C:membrane"/>
    <property type="evidence" value="ECO:0007669"/>
    <property type="project" value="UniProtKB-SubCell"/>
</dbReference>
<dbReference type="CDD" id="cd11557">
    <property type="entry name" value="ST7"/>
    <property type="match status" value="1"/>
</dbReference>
<dbReference type="InterPro" id="IPR007311">
    <property type="entry name" value="ST7"/>
</dbReference>
<dbReference type="PANTHER" id="PTHR12745">
    <property type="entry name" value="SUPPRESSION OF TUMORIGENICITY 7"/>
    <property type="match status" value="1"/>
</dbReference>
<dbReference type="PANTHER" id="PTHR12745:SF10">
    <property type="entry name" value="SUPPRESSOR OF TUMORIGENICITY 7 PROTEIN"/>
    <property type="match status" value="1"/>
</dbReference>
<dbReference type="Pfam" id="PF04184">
    <property type="entry name" value="ST7"/>
    <property type="match status" value="2"/>
</dbReference>